<protein>
    <recommendedName>
        <fullName evidence="1">Polyribonucleotide nucleotidyltransferase 1</fullName>
        <ecNumber evidence="1">2.7.7.8</ecNumber>
    </recommendedName>
    <alternativeName>
        <fullName evidence="1">Polynucleotide phosphorylase 1</fullName>
        <shortName evidence="1">PNPase 1</shortName>
    </alternativeName>
</protein>
<comment type="function">
    <text evidence="1">Involved in mRNA degradation. Catalyzes the phosphorolysis of single-stranded polyribonucleotides processively in the 3'- to 5'-direction.</text>
</comment>
<comment type="catalytic activity">
    <reaction evidence="1">
        <text>RNA(n+1) + phosphate = RNA(n) + a ribonucleoside 5'-diphosphate</text>
        <dbReference type="Rhea" id="RHEA:22096"/>
        <dbReference type="Rhea" id="RHEA-COMP:14527"/>
        <dbReference type="Rhea" id="RHEA-COMP:17342"/>
        <dbReference type="ChEBI" id="CHEBI:43474"/>
        <dbReference type="ChEBI" id="CHEBI:57930"/>
        <dbReference type="ChEBI" id="CHEBI:140395"/>
        <dbReference type="EC" id="2.7.7.8"/>
    </reaction>
</comment>
<comment type="cofactor">
    <cofactor evidence="1">
        <name>Mg(2+)</name>
        <dbReference type="ChEBI" id="CHEBI:18420"/>
    </cofactor>
</comment>
<comment type="subcellular location">
    <subcellularLocation>
        <location evidence="1">Cytoplasm</location>
    </subcellularLocation>
</comment>
<comment type="similarity">
    <text evidence="1">Belongs to the polyribonucleotide nucleotidyltransferase family.</text>
</comment>
<organism>
    <name type="scientific">Alkaliphilus metalliredigens (strain QYMF)</name>
    <dbReference type="NCBI Taxonomy" id="293826"/>
    <lineage>
        <taxon>Bacteria</taxon>
        <taxon>Bacillati</taxon>
        <taxon>Bacillota</taxon>
        <taxon>Clostridia</taxon>
        <taxon>Peptostreptococcales</taxon>
        <taxon>Natronincolaceae</taxon>
        <taxon>Alkaliphilus</taxon>
    </lineage>
</organism>
<evidence type="ECO:0000255" key="1">
    <source>
        <dbReference type="HAMAP-Rule" id="MF_01595"/>
    </source>
</evidence>
<keyword id="KW-0963">Cytoplasm</keyword>
<keyword id="KW-0460">Magnesium</keyword>
<keyword id="KW-0479">Metal-binding</keyword>
<keyword id="KW-0548">Nucleotidyltransferase</keyword>
<keyword id="KW-1185">Reference proteome</keyword>
<keyword id="KW-0694">RNA-binding</keyword>
<keyword id="KW-0808">Transferase</keyword>
<gene>
    <name evidence="1" type="primary">pnp1</name>
    <name type="ordered locus">Amet_1001</name>
</gene>
<feature type="chain" id="PRO_0000329491" description="Polyribonucleotide nucleotidyltransferase 1">
    <location>
        <begin position="1"/>
        <end position="702"/>
    </location>
</feature>
<feature type="domain" description="KH" evidence="1">
    <location>
        <begin position="550"/>
        <end position="609"/>
    </location>
</feature>
<feature type="domain" description="S1 motif" evidence="1">
    <location>
        <begin position="619"/>
        <end position="687"/>
    </location>
</feature>
<feature type="binding site" evidence="1">
    <location>
        <position position="483"/>
    </location>
    <ligand>
        <name>Mg(2+)</name>
        <dbReference type="ChEBI" id="CHEBI:18420"/>
    </ligand>
</feature>
<feature type="binding site" evidence="1">
    <location>
        <position position="489"/>
    </location>
    <ligand>
        <name>Mg(2+)</name>
        <dbReference type="ChEBI" id="CHEBI:18420"/>
    </ligand>
</feature>
<sequence>MIRTFEMELGGRPFVVELGKVAELAQGSCMIKYGDTFVLVTACASKEPKEGLDFFPLSCDYEEKLYAVGKIPGGFIKRESRPSEKATLTARLIDRPIRPLFPKGYHNDVQVIATVLSVDQDCPPDISAMIGSSIALSVSNIPFMGPTASVSVGMIDGEYIVNPTSEQKELSELELIVSGTKDAVMMIEAGANELTEAQILDAIMFAHEEIKKIVTFIEHIVSEVGKPKSEVIVKETDSELLAEVVSFLDTKLANAIKTVDKTERNENIKAISAEALDYFEEKYEGRSKEVNTILSKQIKVETRKMITSEGIRPDNRKLDEIRPISSEVGILPRTHGTGLFTRGETQVLTVTTLGDLRDAQRIDGLGEEDEKRYMHHYNFPPYSVGETRFMRGPSRREIGHGALVERALKPMIPCKEDFPYAIRLVSEVLACNGSSSQASVCGSTLSLMDAGVPIKGMVAGIAMGLIKEEGQIAILSDIQGMEDALGDMDLKVAGTENGITALQMDIKIAGIDRNIMETALAQAKIGRTHILNKMKEAITSPRTELSAYAPQVTKLKVHPDKVREVIGAGGKVINKIIDETGVKINIENDGTIYIAAPDQESARVALEMIELIVKDPVVGEVYTGKVIKIMDFGAFVEILPGKEGLVHISNLAHERVAKVADVLAEGDLIEVKLMEINPQGKIGLSRKALLPKPEKEAPNKVE</sequence>
<dbReference type="EC" id="2.7.7.8" evidence="1"/>
<dbReference type="EMBL" id="CP000724">
    <property type="protein sequence ID" value="ABR47218.1"/>
    <property type="molecule type" value="Genomic_DNA"/>
</dbReference>
<dbReference type="RefSeq" id="WP_012062260.1">
    <property type="nucleotide sequence ID" value="NC_009633.1"/>
</dbReference>
<dbReference type="SMR" id="A6TM00"/>
<dbReference type="STRING" id="293826.Amet_1001"/>
<dbReference type="KEGG" id="amt:Amet_1001"/>
<dbReference type="eggNOG" id="COG1185">
    <property type="taxonomic scope" value="Bacteria"/>
</dbReference>
<dbReference type="HOGENOM" id="CLU_004217_2_2_9"/>
<dbReference type="OrthoDB" id="9804305at2"/>
<dbReference type="Proteomes" id="UP000001572">
    <property type="component" value="Chromosome"/>
</dbReference>
<dbReference type="GO" id="GO:0005829">
    <property type="term" value="C:cytosol"/>
    <property type="evidence" value="ECO:0007669"/>
    <property type="project" value="TreeGrafter"/>
</dbReference>
<dbReference type="GO" id="GO:0000175">
    <property type="term" value="F:3'-5'-RNA exonuclease activity"/>
    <property type="evidence" value="ECO:0007669"/>
    <property type="project" value="TreeGrafter"/>
</dbReference>
<dbReference type="GO" id="GO:0000287">
    <property type="term" value="F:magnesium ion binding"/>
    <property type="evidence" value="ECO:0007669"/>
    <property type="project" value="UniProtKB-UniRule"/>
</dbReference>
<dbReference type="GO" id="GO:0004654">
    <property type="term" value="F:polyribonucleotide nucleotidyltransferase activity"/>
    <property type="evidence" value="ECO:0007669"/>
    <property type="project" value="UniProtKB-UniRule"/>
</dbReference>
<dbReference type="GO" id="GO:0003723">
    <property type="term" value="F:RNA binding"/>
    <property type="evidence" value="ECO:0007669"/>
    <property type="project" value="UniProtKB-UniRule"/>
</dbReference>
<dbReference type="GO" id="GO:0006402">
    <property type="term" value="P:mRNA catabolic process"/>
    <property type="evidence" value="ECO:0007669"/>
    <property type="project" value="UniProtKB-UniRule"/>
</dbReference>
<dbReference type="GO" id="GO:0006396">
    <property type="term" value="P:RNA processing"/>
    <property type="evidence" value="ECO:0007669"/>
    <property type="project" value="InterPro"/>
</dbReference>
<dbReference type="CDD" id="cd02393">
    <property type="entry name" value="KH-I_PNPase"/>
    <property type="match status" value="1"/>
</dbReference>
<dbReference type="CDD" id="cd11363">
    <property type="entry name" value="RNase_PH_PNPase_1"/>
    <property type="match status" value="1"/>
</dbReference>
<dbReference type="CDD" id="cd11364">
    <property type="entry name" value="RNase_PH_PNPase_2"/>
    <property type="match status" value="1"/>
</dbReference>
<dbReference type="CDD" id="cd04472">
    <property type="entry name" value="S1_PNPase"/>
    <property type="match status" value="1"/>
</dbReference>
<dbReference type="FunFam" id="2.40.50.140:FF:000023">
    <property type="entry name" value="Polyribonucleotide nucleotidyltransferase"/>
    <property type="match status" value="1"/>
</dbReference>
<dbReference type="FunFam" id="3.30.1370.10:FF:000001">
    <property type="entry name" value="Polyribonucleotide nucleotidyltransferase"/>
    <property type="match status" value="1"/>
</dbReference>
<dbReference type="FunFam" id="3.30.230.70:FF:000001">
    <property type="entry name" value="Polyribonucleotide nucleotidyltransferase"/>
    <property type="match status" value="1"/>
</dbReference>
<dbReference type="FunFam" id="3.30.230.70:FF:000002">
    <property type="entry name" value="Polyribonucleotide nucleotidyltransferase"/>
    <property type="match status" value="1"/>
</dbReference>
<dbReference type="Gene3D" id="3.30.230.70">
    <property type="entry name" value="GHMP Kinase, N-terminal domain"/>
    <property type="match status" value="2"/>
</dbReference>
<dbReference type="Gene3D" id="3.30.1370.10">
    <property type="entry name" value="K Homology domain, type 1"/>
    <property type="match status" value="1"/>
</dbReference>
<dbReference type="Gene3D" id="2.40.50.140">
    <property type="entry name" value="Nucleic acid-binding proteins"/>
    <property type="match status" value="1"/>
</dbReference>
<dbReference type="HAMAP" id="MF_01595">
    <property type="entry name" value="PNPase"/>
    <property type="match status" value="1"/>
</dbReference>
<dbReference type="InterPro" id="IPR001247">
    <property type="entry name" value="ExoRNase_PH_dom1"/>
</dbReference>
<dbReference type="InterPro" id="IPR015847">
    <property type="entry name" value="ExoRNase_PH_dom2"/>
</dbReference>
<dbReference type="InterPro" id="IPR036345">
    <property type="entry name" value="ExoRNase_PH_dom2_sf"/>
</dbReference>
<dbReference type="InterPro" id="IPR004087">
    <property type="entry name" value="KH_dom"/>
</dbReference>
<dbReference type="InterPro" id="IPR004088">
    <property type="entry name" value="KH_dom_type_1"/>
</dbReference>
<dbReference type="InterPro" id="IPR036612">
    <property type="entry name" value="KH_dom_type_1_sf"/>
</dbReference>
<dbReference type="InterPro" id="IPR012340">
    <property type="entry name" value="NA-bd_OB-fold"/>
</dbReference>
<dbReference type="InterPro" id="IPR012162">
    <property type="entry name" value="PNPase"/>
</dbReference>
<dbReference type="InterPro" id="IPR027408">
    <property type="entry name" value="PNPase/RNase_PH_dom_sf"/>
</dbReference>
<dbReference type="InterPro" id="IPR015848">
    <property type="entry name" value="PNPase_PH_RNA-bd_bac/org-type"/>
</dbReference>
<dbReference type="InterPro" id="IPR036456">
    <property type="entry name" value="PNPase_PH_RNA-bd_sf"/>
</dbReference>
<dbReference type="InterPro" id="IPR020568">
    <property type="entry name" value="Ribosomal_Su5_D2-typ_SF"/>
</dbReference>
<dbReference type="InterPro" id="IPR003029">
    <property type="entry name" value="S1_domain"/>
</dbReference>
<dbReference type="NCBIfam" id="TIGR03591">
    <property type="entry name" value="polynuc_phos"/>
    <property type="match status" value="1"/>
</dbReference>
<dbReference type="NCBIfam" id="NF008805">
    <property type="entry name" value="PRK11824.1"/>
    <property type="match status" value="1"/>
</dbReference>
<dbReference type="PANTHER" id="PTHR11252">
    <property type="entry name" value="POLYRIBONUCLEOTIDE NUCLEOTIDYLTRANSFERASE"/>
    <property type="match status" value="1"/>
</dbReference>
<dbReference type="PANTHER" id="PTHR11252:SF0">
    <property type="entry name" value="POLYRIBONUCLEOTIDE NUCLEOTIDYLTRANSFERASE 1, MITOCHONDRIAL"/>
    <property type="match status" value="1"/>
</dbReference>
<dbReference type="Pfam" id="PF00013">
    <property type="entry name" value="KH_1"/>
    <property type="match status" value="1"/>
</dbReference>
<dbReference type="Pfam" id="PF03726">
    <property type="entry name" value="PNPase"/>
    <property type="match status" value="1"/>
</dbReference>
<dbReference type="Pfam" id="PF01138">
    <property type="entry name" value="RNase_PH"/>
    <property type="match status" value="2"/>
</dbReference>
<dbReference type="Pfam" id="PF03725">
    <property type="entry name" value="RNase_PH_C"/>
    <property type="match status" value="2"/>
</dbReference>
<dbReference type="Pfam" id="PF00575">
    <property type="entry name" value="S1"/>
    <property type="match status" value="1"/>
</dbReference>
<dbReference type="PIRSF" id="PIRSF005499">
    <property type="entry name" value="PNPase"/>
    <property type="match status" value="1"/>
</dbReference>
<dbReference type="SMART" id="SM00322">
    <property type="entry name" value="KH"/>
    <property type="match status" value="1"/>
</dbReference>
<dbReference type="SMART" id="SM00316">
    <property type="entry name" value="S1"/>
    <property type="match status" value="1"/>
</dbReference>
<dbReference type="SUPFAM" id="SSF54791">
    <property type="entry name" value="Eukaryotic type KH-domain (KH-domain type I)"/>
    <property type="match status" value="1"/>
</dbReference>
<dbReference type="SUPFAM" id="SSF50249">
    <property type="entry name" value="Nucleic acid-binding proteins"/>
    <property type="match status" value="1"/>
</dbReference>
<dbReference type="SUPFAM" id="SSF46915">
    <property type="entry name" value="Polynucleotide phosphorylase/guanosine pentaphosphate synthase (PNPase/GPSI), domain 3"/>
    <property type="match status" value="1"/>
</dbReference>
<dbReference type="SUPFAM" id="SSF55666">
    <property type="entry name" value="Ribonuclease PH domain 2-like"/>
    <property type="match status" value="2"/>
</dbReference>
<dbReference type="SUPFAM" id="SSF54211">
    <property type="entry name" value="Ribosomal protein S5 domain 2-like"/>
    <property type="match status" value="2"/>
</dbReference>
<dbReference type="PROSITE" id="PS50084">
    <property type="entry name" value="KH_TYPE_1"/>
    <property type="match status" value="1"/>
</dbReference>
<dbReference type="PROSITE" id="PS50126">
    <property type="entry name" value="S1"/>
    <property type="match status" value="1"/>
</dbReference>
<proteinExistence type="inferred from homology"/>
<accession>A6TM00</accession>
<name>PNP1_ALKMQ</name>
<reference key="1">
    <citation type="journal article" date="2016" name="Genome Announc.">
        <title>Complete genome sequence of Alkaliphilus metalliredigens strain QYMF, an alkaliphilic and metal-reducing bacterium isolated from borax-contaminated leachate ponds.</title>
        <authorList>
            <person name="Hwang C."/>
            <person name="Copeland A."/>
            <person name="Lucas S."/>
            <person name="Lapidus A."/>
            <person name="Barry K."/>
            <person name="Detter J.C."/>
            <person name="Glavina Del Rio T."/>
            <person name="Hammon N."/>
            <person name="Israni S."/>
            <person name="Dalin E."/>
            <person name="Tice H."/>
            <person name="Pitluck S."/>
            <person name="Chertkov O."/>
            <person name="Brettin T."/>
            <person name="Bruce D."/>
            <person name="Han C."/>
            <person name="Schmutz J."/>
            <person name="Larimer F."/>
            <person name="Land M.L."/>
            <person name="Hauser L."/>
            <person name="Kyrpides N."/>
            <person name="Mikhailova N."/>
            <person name="Ye Q."/>
            <person name="Zhou J."/>
            <person name="Richardson P."/>
            <person name="Fields M.W."/>
        </authorList>
    </citation>
    <scope>NUCLEOTIDE SEQUENCE [LARGE SCALE GENOMIC DNA]</scope>
    <source>
        <strain>QYMF</strain>
    </source>
</reference>